<sequence>MLTAEEKASVISLFAKVNVEEVGGEALGRLLVVYPWTQRFFEHFGDLSSADAILGNPKVKGHGKKVLNSFSEGLKQLDDLKGAFASLSELHCDKLHVDPENFRLLGNVLVVVLARRFGGEFTPELQANFQKVVTGVANALAHRYH</sequence>
<comment type="subunit">
    <text>Heterotetramer of two alpha chains and two beta chains.</text>
</comment>
<comment type="similarity">
    <text evidence="1">Belongs to the globin family.</text>
</comment>
<feature type="chain" id="PRO_0000053107" description="Hemoglobin fetal subunit beta">
    <location>
        <begin position="1"/>
        <end position="145"/>
    </location>
</feature>
<feature type="domain" description="Globin" evidence="1">
    <location>
        <begin position="1"/>
        <end position="145"/>
    </location>
</feature>
<feature type="binding site" description="distal binding residue">
    <location>
        <position position="62"/>
    </location>
    <ligand>
        <name>heme b</name>
        <dbReference type="ChEBI" id="CHEBI:60344"/>
    </ligand>
    <ligandPart>
        <name>Fe</name>
        <dbReference type="ChEBI" id="CHEBI:18248"/>
    </ligandPart>
</feature>
<feature type="binding site" description="proximal binding residue">
    <location>
        <position position="91"/>
    </location>
    <ligand>
        <name>heme b</name>
        <dbReference type="ChEBI" id="CHEBI:60344"/>
    </ligand>
    <ligandPart>
        <name>Fe</name>
        <dbReference type="ChEBI" id="CHEBI:18248"/>
    </ligandPart>
</feature>
<feature type="sequence conflict" description="In Ref. 2; AA sequence." evidence="2" ref="2">
    <original>GE</original>
    <variation>EG</variation>
    <location>
        <begin position="119"/>
        <end position="120"/>
    </location>
</feature>
<name>HBBF_SHEEP</name>
<reference key="1">
    <citation type="journal article" date="1981" name="J. Biol. Chem.">
        <title>Hemoglobin switching in sheep. Isolation of the fetal gamma-globin gene and demonstration that the fetal gamma- and adult beta A-globin genes lie within eight kilobase segments of homologous DNA.</title>
        <authorList>
            <person name="Kretschmer P.J."/>
            <person name="Coon H.C."/>
            <person name="Davis A."/>
            <person name="Harrison M."/>
            <person name="Nienhuis A.W."/>
        </authorList>
    </citation>
    <scope>NUCLEOTIDE SEQUENCE [GENOMIC DNA] OF 1-29; 52-96 AND 104-145</scope>
</reference>
<reference key="2">
    <citation type="journal article" date="1976" name="Biochim. Biophys. Acta">
        <title>The gamma chain of the lamb.</title>
        <authorList>
            <person name="Darbre P.D."/>
            <person name="Lehmann H."/>
        </authorList>
    </citation>
    <scope>PROTEIN SEQUENCE</scope>
</reference>
<evidence type="ECO:0000255" key="1">
    <source>
        <dbReference type="PROSITE-ProRule" id="PRU00238"/>
    </source>
</evidence>
<evidence type="ECO:0000305" key="2"/>
<accession>P02083</accession>
<proteinExistence type="evidence at protein level"/>
<protein>
    <recommendedName>
        <fullName>Hemoglobin fetal subunit beta</fullName>
    </recommendedName>
    <alternativeName>
        <fullName>Beta-globin, fetal</fullName>
    </alternativeName>
    <alternativeName>
        <fullName>Hemoglobin beta chain, fetal</fullName>
    </alternativeName>
    <alternativeName>
        <fullName>Hemoglobin gamma chain</fullName>
    </alternativeName>
</protein>
<organism>
    <name type="scientific">Ovis aries</name>
    <name type="common">Sheep</name>
    <dbReference type="NCBI Taxonomy" id="9940"/>
    <lineage>
        <taxon>Eukaryota</taxon>
        <taxon>Metazoa</taxon>
        <taxon>Chordata</taxon>
        <taxon>Craniata</taxon>
        <taxon>Vertebrata</taxon>
        <taxon>Euteleostomi</taxon>
        <taxon>Mammalia</taxon>
        <taxon>Eutheria</taxon>
        <taxon>Laurasiatheria</taxon>
        <taxon>Artiodactyla</taxon>
        <taxon>Ruminantia</taxon>
        <taxon>Pecora</taxon>
        <taxon>Bovidae</taxon>
        <taxon>Caprinae</taxon>
        <taxon>Ovis</taxon>
    </lineage>
</organism>
<dbReference type="EMBL" id="K02824">
    <property type="protein sequence ID" value="AAA31533.1"/>
    <property type="molecule type" value="Genomic_DNA"/>
</dbReference>
<dbReference type="EMBL" id="K02825">
    <property type="protein sequence ID" value="AAA31534.1"/>
    <property type="molecule type" value="Genomic_DNA"/>
</dbReference>
<dbReference type="EMBL" id="K02826">
    <property type="protein sequence ID" value="AAA31535.1"/>
    <property type="molecule type" value="Genomic_DNA"/>
</dbReference>
<dbReference type="PIR" id="B92306">
    <property type="entry name" value="HGSH"/>
</dbReference>
<dbReference type="RefSeq" id="XP_004016290.1">
    <property type="nucleotide sequence ID" value="XM_004016241.4"/>
</dbReference>
<dbReference type="SMR" id="P02083"/>
<dbReference type="STRING" id="9940.ENSOARP00000020597"/>
<dbReference type="PaxDb" id="9940-ENSOARP00000020597"/>
<dbReference type="Ensembl" id="ENSOART00215077626">
    <property type="protein sequence ID" value="ENSOARP00215042620"/>
    <property type="gene ID" value="ENSOARG00215045745"/>
</dbReference>
<dbReference type="Ensembl" id="ENSOART00220045283">
    <property type="protein sequence ID" value="ENSOARP00220024598"/>
    <property type="gene ID" value="ENSOARG00220027085"/>
</dbReference>
<dbReference type="Ensembl" id="ENSOART00225066455">
    <property type="protein sequence ID" value="ENSOARP00225033441"/>
    <property type="gene ID" value="ENSOARG00225040139"/>
</dbReference>
<dbReference type="GeneID" id="101106199"/>
<dbReference type="KEGG" id="oas:101106199"/>
<dbReference type="eggNOG" id="KOG3378">
    <property type="taxonomic scope" value="Eukaryota"/>
</dbReference>
<dbReference type="OMA" id="INSIWGH"/>
<dbReference type="OrthoDB" id="9886081at2759"/>
<dbReference type="Proteomes" id="UP000002356">
    <property type="component" value="Unplaced"/>
</dbReference>
<dbReference type="GO" id="GO:0072562">
    <property type="term" value="C:blood microparticle"/>
    <property type="evidence" value="ECO:0007669"/>
    <property type="project" value="TreeGrafter"/>
</dbReference>
<dbReference type="GO" id="GO:0031838">
    <property type="term" value="C:haptoglobin-hemoglobin complex"/>
    <property type="evidence" value="ECO:0007669"/>
    <property type="project" value="TreeGrafter"/>
</dbReference>
<dbReference type="GO" id="GO:0005833">
    <property type="term" value="C:hemoglobin complex"/>
    <property type="evidence" value="ECO:0007669"/>
    <property type="project" value="InterPro"/>
</dbReference>
<dbReference type="GO" id="GO:0031720">
    <property type="term" value="F:haptoglobin binding"/>
    <property type="evidence" value="ECO:0007669"/>
    <property type="project" value="TreeGrafter"/>
</dbReference>
<dbReference type="GO" id="GO:0020037">
    <property type="term" value="F:heme binding"/>
    <property type="evidence" value="ECO:0007669"/>
    <property type="project" value="InterPro"/>
</dbReference>
<dbReference type="GO" id="GO:0031721">
    <property type="term" value="F:hemoglobin alpha binding"/>
    <property type="evidence" value="ECO:0007669"/>
    <property type="project" value="TreeGrafter"/>
</dbReference>
<dbReference type="GO" id="GO:0046872">
    <property type="term" value="F:metal ion binding"/>
    <property type="evidence" value="ECO:0007669"/>
    <property type="project" value="UniProtKB-KW"/>
</dbReference>
<dbReference type="GO" id="GO:0043177">
    <property type="term" value="F:organic acid binding"/>
    <property type="evidence" value="ECO:0007669"/>
    <property type="project" value="TreeGrafter"/>
</dbReference>
<dbReference type="GO" id="GO:0019825">
    <property type="term" value="F:oxygen binding"/>
    <property type="evidence" value="ECO:0007669"/>
    <property type="project" value="InterPro"/>
</dbReference>
<dbReference type="GO" id="GO:0005344">
    <property type="term" value="F:oxygen carrier activity"/>
    <property type="evidence" value="ECO:0007669"/>
    <property type="project" value="UniProtKB-KW"/>
</dbReference>
<dbReference type="GO" id="GO:0004601">
    <property type="term" value="F:peroxidase activity"/>
    <property type="evidence" value="ECO:0007669"/>
    <property type="project" value="TreeGrafter"/>
</dbReference>
<dbReference type="GO" id="GO:0042744">
    <property type="term" value="P:hydrogen peroxide catabolic process"/>
    <property type="evidence" value="ECO:0007669"/>
    <property type="project" value="TreeGrafter"/>
</dbReference>
<dbReference type="CDD" id="cd08925">
    <property type="entry name" value="Hb-beta-like"/>
    <property type="match status" value="1"/>
</dbReference>
<dbReference type="FunFam" id="1.10.490.10:FF:000001">
    <property type="entry name" value="Hemoglobin subunit beta"/>
    <property type="match status" value="1"/>
</dbReference>
<dbReference type="Gene3D" id="1.10.490.10">
    <property type="entry name" value="Globins"/>
    <property type="match status" value="1"/>
</dbReference>
<dbReference type="InterPro" id="IPR000971">
    <property type="entry name" value="Globin"/>
</dbReference>
<dbReference type="InterPro" id="IPR009050">
    <property type="entry name" value="Globin-like_sf"/>
</dbReference>
<dbReference type="InterPro" id="IPR012292">
    <property type="entry name" value="Globin/Proto"/>
</dbReference>
<dbReference type="InterPro" id="IPR002337">
    <property type="entry name" value="Hemoglobin_b"/>
</dbReference>
<dbReference type="InterPro" id="IPR050056">
    <property type="entry name" value="Hemoglobin_oxygen_transport"/>
</dbReference>
<dbReference type="PANTHER" id="PTHR11442">
    <property type="entry name" value="HEMOGLOBIN FAMILY MEMBER"/>
    <property type="match status" value="1"/>
</dbReference>
<dbReference type="PANTHER" id="PTHR11442:SF42">
    <property type="entry name" value="HEMOGLOBIN SUBUNIT BETA"/>
    <property type="match status" value="1"/>
</dbReference>
<dbReference type="Pfam" id="PF00042">
    <property type="entry name" value="Globin"/>
    <property type="match status" value="1"/>
</dbReference>
<dbReference type="PRINTS" id="PR00814">
    <property type="entry name" value="BETAHAEM"/>
</dbReference>
<dbReference type="SUPFAM" id="SSF46458">
    <property type="entry name" value="Globin-like"/>
    <property type="match status" value="1"/>
</dbReference>
<dbReference type="PROSITE" id="PS01033">
    <property type="entry name" value="GLOBIN"/>
    <property type="match status" value="1"/>
</dbReference>
<keyword id="KW-0903">Direct protein sequencing</keyword>
<keyword id="KW-0349">Heme</keyword>
<keyword id="KW-0408">Iron</keyword>
<keyword id="KW-0479">Metal-binding</keyword>
<keyword id="KW-0561">Oxygen transport</keyword>
<keyword id="KW-1185">Reference proteome</keyword>
<keyword id="KW-0813">Transport</keyword>